<protein>
    <recommendedName>
        <fullName evidence="1">3-hydroxyacyl-[acyl-carrier-protein] dehydratase FabZ</fullName>
        <ecNumber evidence="1">4.2.1.59</ecNumber>
    </recommendedName>
    <alternativeName>
        <fullName evidence="1">(3R)-hydroxymyristoyl-[acyl-carrier-protein] dehydratase</fullName>
        <shortName evidence="1">(3R)-hydroxymyristoyl-ACP dehydrase</shortName>
    </alternativeName>
    <alternativeName>
        <fullName evidence="1">Beta-hydroxyacyl-ACP dehydratase</fullName>
    </alternativeName>
</protein>
<dbReference type="EC" id="4.2.1.59" evidence="1"/>
<dbReference type="EMBL" id="CP000813">
    <property type="protein sequence ID" value="ABV63939.1"/>
    <property type="molecule type" value="Genomic_DNA"/>
</dbReference>
<dbReference type="RefSeq" id="WP_012011512.1">
    <property type="nucleotide sequence ID" value="NZ_VEIS01000002.1"/>
</dbReference>
<dbReference type="SMR" id="A8FI72"/>
<dbReference type="STRING" id="315750.BPUM_3286"/>
<dbReference type="GeneID" id="61768774"/>
<dbReference type="KEGG" id="bpu:BPUM_3286"/>
<dbReference type="eggNOG" id="COG0764">
    <property type="taxonomic scope" value="Bacteria"/>
</dbReference>
<dbReference type="HOGENOM" id="CLU_078912_3_0_9"/>
<dbReference type="OrthoDB" id="9772788at2"/>
<dbReference type="Proteomes" id="UP000001355">
    <property type="component" value="Chromosome"/>
</dbReference>
<dbReference type="GO" id="GO:0005737">
    <property type="term" value="C:cytoplasm"/>
    <property type="evidence" value="ECO:0007669"/>
    <property type="project" value="UniProtKB-SubCell"/>
</dbReference>
<dbReference type="GO" id="GO:0016020">
    <property type="term" value="C:membrane"/>
    <property type="evidence" value="ECO:0007669"/>
    <property type="project" value="GOC"/>
</dbReference>
<dbReference type="GO" id="GO:0019171">
    <property type="term" value="F:(3R)-hydroxyacyl-[acyl-carrier-protein] dehydratase activity"/>
    <property type="evidence" value="ECO:0007669"/>
    <property type="project" value="UniProtKB-EC"/>
</dbReference>
<dbReference type="GO" id="GO:0006633">
    <property type="term" value="P:fatty acid biosynthetic process"/>
    <property type="evidence" value="ECO:0007669"/>
    <property type="project" value="UniProtKB-UniRule"/>
</dbReference>
<dbReference type="GO" id="GO:0009245">
    <property type="term" value="P:lipid A biosynthetic process"/>
    <property type="evidence" value="ECO:0007669"/>
    <property type="project" value="UniProtKB-UniRule"/>
</dbReference>
<dbReference type="CDD" id="cd01288">
    <property type="entry name" value="FabZ"/>
    <property type="match status" value="1"/>
</dbReference>
<dbReference type="FunFam" id="3.10.129.10:FF:000001">
    <property type="entry name" value="3-hydroxyacyl-[acyl-carrier-protein] dehydratase FabZ"/>
    <property type="match status" value="1"/>
</dbReference>
<dbReference type="Gene3D" id="3.10.129.10">
    <property type="entry name" value="Hotdog Thioesterase"/>
    <property type="match status" value="1"/>
</dbReference>
<dbReference type="HAMAP" id="MF_00406">
    <property type="entry name" value="FabZ"/>
    <property type="match status" value="1"/>
</dbReference>
<dbReference type="InterPro" id="IPR013114">
    <property type="entry name" value="FabA_FabZ"/>
</dbReference>
<dbReference type="InterPro" id="IPR010084">
    <property type="entry name" value="FabZ"/>
</dbReference>
<dbReference type="InterPro" id="IPR029069">
    <property type="entry name" value="HotDog_dom_sf"/>
</dbReference>
<dbReference type="NCBIfam" id="TIGR01750">
    <property type="entry name" value="fabZ"/>
    <property type="match status" value="1"/>
</dbReference>
<dbReference type="NCBIfam" id="NF000582">
    <property type="entry name" value="PRK00006.1"/>
    <property type="match status" value="1"/>
</dbReference>
<dbReference type="PANTHER" id="PTHR30272">
    <property type="entry name" value="3-HYDROXYACYL-[ACYL-CARRIER-PROTEIN] DEHYDRATASE"/>
    <property type="match status" value="1"/>
</dbReference>
<dbReference type="PANTHER" id="PTHR30272:SF1">
    <property type="entry name" value="3-HYDROXYACYL-[ACYL-CARRIER-PROTEIN] DEHYDRATASE"/>
    <property type="match status" value="1"/>
</dbReference>
<dbReference type="Pfam" id="PF07977">
    <property type="entry name" value="FabA"/>
    <property type="match status" value="1"/>
</dbReference>
<dbReference type="SUPFAM" id="SSF54637">
    <property type="entry name" value="Thioesterase/thiol ester dehydrase-isomerase"/>
    <property type="match status" value="1"/>
</dbReference>
<sequence>MLDAQQIQDIIPHRYPFLLVDRILEVEGEKRAVGIKNVTVNEEFFNGHFPGYPVMPGVLIVEALAQVFGVIMLGKEENKGKIGLFAGIDGCRFKRQVKPGDQLRLEVEVTRLRGPVAKGKAVATVDGEVACEAELTFSIGPKVS</sequence>
<organism>
    <name type="scientific">Bacillus pumilus (strain SAFR-032)</name>
    <dbReference type="NCBI Taxonomy" id="315750"/>
    <lineage>
        <taxon>Bacteria</taxon>
        <taxon>Bacillati</taxon>
        <taxon>Bacillota</taxon>
        <taxon>Bacilli</taxon>
        <taxon>Bacillales</taxon>
        <taxon>Bacillaceae</taxon>
        <taxon>Bacillus</taxon>
    </lineage>
</organism>
<comment type="function">
    <text evidence="1">Involved in unsaturated fatty acids biosynthesis. Catalyzes the dehydration of short chain beta-hydroxyacyl-ACPs and long chain saturated and unsaturated beta-hydroxyacyl-ACPs.</text>
</comment>
<comment type="catalytic activity">
    <reaction evidence="1">
        <text>a (3R)-hydroxyacyl-[ACP] = a (2E)-enoyl-[ACP] + H2O</text>
        <dbReference type="Rhea" id="RHEA:13097"/>
        <dbReference type="Rhea" id="RHEA-COMP:9925"/>
        <dbReference type="Rhea" id="RHEA-COMP:9945"/>
        <dbReference type="ChEBI" id="CHEBI:15377"/>
        <dbReference type="ChEBI" id="CHEBI:78784"/>
        <dbReference type="ChEBI" id="CHEBI:78827"/>
        <dbReference type="EC" id="4.2.1.59"/>
    </reaction>
</comment>
<comment type="subcellular location">
    <subcellularLocation>
        <location evidence="1">Cytoplasm</location>
    </subcellularLocation>
</comment>
<comment type="similarity">
    <text evidence="1">Belongs to the thioester dehydratase family. FabZ subfamily.</text>
</comment>
<evidence type="ECO:0000255" key="1">
    <source>
        <dbReference type="HAMAP-Rule" id="MF_00406"/>
    </source>
</evidence>
<proteinExistence type="inferred from homology"/>
<gene>
    <name evidence="1" type="primary">fabZ</name>
    <name type="ordered locus">BPUM_3286</name>
</gene>
<reference key="1">
    <citation type="journal article" date="2007" name="PLoS ONE">
        <title>Paradoxical DNA repair and peroxide resistance gene conservation in Bacillus pumilus SAFR-032.</title>
        <authorList>
            <person name="Gioia J."/>
            <person name="Yerrapragada S."/>
            <person name="Qin X."/>
            <person name="Jiang H."/>
            <person name="Igboeli O.C."/>
            <person name="Muzny D."/>
            <person name="Dugan-Rocha S."/>
            <person name="Ding Y."/>
            <person name="Hawes A."/>
            <person name="Liu W."/>
            <person name="Perez L."/>
            <person name="Kovar C."/>
            <person name="Dinh H."/>
            <person name="Lee S."/>
            <person name="Nazareth L."/>
            <person name="Blyth P."/>
            <person name="Holder M."/>
            <person name="Buhay C."/>
            <person name="Tirumalai M.R."/>
            <person name="Liu Y."/>
            <person name="Dasgupta I."/>
            <person name="Bokhetache L."/>
            <person name="Fujita M."/>
            <person name="Karouia F."/>
            <person name="Eswara Moorthy P."/>
            <person name="Siefert J."/>
            <person name="Uzman A."/>
            <person name="Buzumbo P."/>
            <person name="Verma A."/>
            <person name="Zwiya H."/>
            <person name="McWilliams B.D."/>
            <person name="Olowu A."/>
            <person name="Clinkenbeard K.D."/>
            <person name="Newcombe D."/>
            <person name="Golebiewski L."/>
            <person name="Petrosino J.F."/>
            <person name="Nicholson W.L."/>
            <person name="Fox G.E."/>
            <person name="Venkateswaran K."/>
            <person name="Highlander S.K."/>
            <person name="Weinstock G.M."/>
        </authorList>
    </citation>
    <scope>NUCLEOTIDE SEQUENCE [LARGE SCALE GENOMIC DNA]</scope>
    <source>
        <strain>SAFR-032</strain>
    </source>
</reference>
<feature type="chain" id="PRO_1000060827" description="3-hydroxyacyl-[acyl-carrier-protein] dehydratase FabZ">
    <location>
        <begin position="1"/>
        <end position="144"/>
    </location>
</feature>
<feature type="active site" evidence="1">
    <location>
        <position position="48"/>
    </location>
</feature>
<accession>A8FI72</accession>
<keyword id="KW-0963">Cytoplasm</keyword>
<keyword id="KW-0441">Lipid A biosynthesis</keyword>
<keyword id="KW-0444">Lipid biosynthesis</keyword>
<keyword id="KW-0443">Lipid metabolism</keyword>
<keyword id="KW-0456">Lyase</keyword>
<name>FABZ_BACP2</name>